<protein>
    <recommendedName>
        <fullName evidence="1">Mercuric transport protein MerT</fullName>
    </recommendedName>
    <alternativeName>
        <fullName evidence="1">Mercury ion transport protein</fullName>
    </alternativeName>
</protein>
<proteinExistence type="inferred from homology"/>
<geneLocation type="plasmid">
    <name>IncHI2 pMER610</name>
</geneLocation>
<reference key="1">
    <citation type="submission" date="1996-12" db="EMBL/GenBank/DDBJ databases">
        <authorList>
            <person name="Nikiforov V."/>
            <person name="Yurieva O."/>
            <person name="Kholodii G."/>
            <person name="Minakhin L."/>
            <person name="Gorlenko Z."/>
            <person name="Kalyaeva E."/>
            <person name="Mindlin S."/>
        </authorList>
    </citation>
    <scope>NUCLEOTIDE SEQUENCE [GENOMIC DNA]</scope>
</reference>
<dbReference type="EMBL" id="Y08993">
    <property type="protein sequence ID" value="CAA70196.1"/>
    <property type="molecule type" value="Genomic_DNA"/>
</dbReference>
<dbReference type="GO" id="GO:0005886">
    <property type="term" value="C:plasma membrane"/>
    <property type="evidence" value="ECO:0007669"/>
    <property type="project" value="UniProtKB-SubCell"/>
</dbReference>
<dbReference type="GO" id="GO:0015097">
    <property type="term" value="F:mercury ion transmembrane transporter activity"/>
    <property type="evidence" value="ECO:0007669"/>
    <property type="project" value="InterPro"/>
</dbReference>
<dbReference type="GO" id="GO:0046872">
    <property type="term" value="F:metal ion binding"/>
    <property type="evidence" value="ECO:0007669"/>
    <property type="project" value="UniProtKB-KW"/>
</dbReference>
<dbReference type="Gene3D" id="1.10.287.910">
    <property type="entry name" value="bacterial mercury transporter, merf"/>
    <property type="match status" value="1"/>
</dbReference>
<dbReference type="InterPro" id="IPR003457">
    <property type="entry name" value="Transprt_MerT"/>
</dbReference>
<dbReference type="NCBIfam" id="NF010314">
    <property type="entry name" value="PRK13751.2"/>
    <property type="match status" value="1"/>
</dbReference>
<dbReference type="Pfam" id="PF02411">
    <property type="entry name" value="MerT"/>
    <property type="match status" value="1"/>
</dbReference>
<gene>
    <name type="primary">merT</name>
</gene>
<comment type="function">
    <text evidence="1">Involved in mercury resistance. Probably transfers a mercuric ion from the periplasmic Hg(2+)-binding protein MerP to the cytoplasmic mercuric reductase MerA.</text>
</comment>
<comment type="subcellular location">
    <subcellularLocation>
        <location evidence="3">Cell inner membrane</location>
        <topology evidence="2">Multi-pass membrane protein</topology>
    </subcellularLocation>
</comment>
<comment type="similarity">
    <text evidence="3">Belongs to the MerT family.</text>
</comment>
<keyword id="KW-0997">Cell inner membrane</keyword>
<keyword id="KW-1003">Cell membrane</keyword>
<keyword id="KW-0472">Membrane</keyword>
<keyword id="KW-0475">Mercuric resistance</keyword>
<keyword id="KW-0476">Mercury</keyword>
<keyword id="KW-0479">Metal-binding</keyword>
<keyword id="KW-0614">Plasmid</keyword>
<keyword id="KW-0812">Transmembrane</keyword>
<keyword id="KW-1133">Transmembrane helix</keyword>
<keyword id="KW-0813">Transport</keyword>
<organism>
    <name type="scientific">Alcaligenes sp</name>
    <dbReference type="NCBI Taxonomy" id="512"/>
    <lineage>
        <taxon>Bacteria</taxon>
        <taxon>Pseudomonadati</taxon>
        <taxon>Pseudomonadota</taxon>
        <taxon>Betaproteobacteria</taxon>
        <taxon>Burkholderiales</taxon>
        <taxon>Alcaligenaceae</taxon>
        <taxon>Alcaligenes</taxon>
    </lineage>
</organism>
<evidence type="ECO:0000250" key="1">
    <source>
        <dbReference type="UniProtKB" id="P04140"/>
    </source>
</evidence>
<evidence type="ECO:0000255" key="2"/>
<evidence type="ECO:0000305" key="3"/>
<feature type="chain" id="PRO_0000096428" description="Mercuric transport protein MerT">
    <location>
        <begin position="1"/>
        <end position="116"/>
    </location>
</feature>
<feature type="transmembrane region" description="Helical" evidence="2">
    <location>
        <begin position="16"/>
        <end position="36"/>
    </location>
</feature>
<feature type="transmembrane region" description="Helical" evidence="2">
    <location>
        <begin position="46"/>
        <end position="66"/>
    </location>
</feature>
<feature type="transmembrane region" description="Helical" evidence="2">
    <location>
        <begin position="94"/>
        <end position="114"/>
    </location>
</feature>
<feature type="binding site" evidence="1">
    <location>
        <position position="24"/>
    </location>
    <ligand>
        <name>Hg(2+)</name>
        <dbReference type="ChEBI" id="CHEBI:16793"/>
    </ligand>
</feature>
<feature type="binding site" evidence="1">
    <location>
        <position position="25"/>
    </location>
    <ligand>
        <name>Hg(2+)</name>
        <dbReference type="ChEBI" id="CHEBI:16793"/>
    </ligand>
</feature>
<feature type="binding site" evidence="1">
    <location>
        <position position="76"/>
    </location>
    <ligand>
        <name>Hg(2+)</name>
        <dbReference type="ChEBI" id="CHEBI:16793"/>
    </ligand>
</feature>
<feature type="binding site" evidence="1">
    <location>
        <position position="82"/>
    </location>
    <ligand>
        <name>Hg(2+)</name>
        <dbReference type="ChEBI" id="CHEBI:16793"/>
    </ligand>
</feature>
<accession>P94185</accession>
<sequence>MSEPQNGRGALFAGGLAAILASACCLGPLVLIALGFSGAWIGNLTVLEPYRPIFIGAALVALFFAWRRIYRPAQACKPGEVCAIPQVRATYKLIFWIVAALVLVALGFPYVMPFFY</sequence>
<name>MERT_ALCSP</name>